<feature type="chain" id="PRO_0000292875" description="Interferon-induced GTP-binding protein Mx">
    <location>
        <begin position="1"/>
        <end position="629"/>
    </location>
</feature>
<feature type="domain" description="Dynamin-type G" evidence="4">
    <location>
        <begin position="30"/>
        <end position="303"/>
    </location>
</feature>
<feature type="domain" description="GED" evidence="3">
    <location>
        <begin position="543"/>
        <end position="629"/>
    </location>
</feature>
<feature type="region of interest" description="G1 motif" evidence="4">
    <location>
        <begin position="40"/>
        <end position="47"/>
    </location>
</feature>
<feature type="region of interest" description="G2 motif" evidence="4">
    <location>
        <begin position="65"/>
        <end position="67"/>
    </location>
</feature>
<feature type="region of interest" description="G3 motif" evidence="4">
    <location>
        <begin position="141"/>
        <end position="144"/>
    </location>
</feature>
<feature type="region of interest" description="G4 motif" evidence="4">
    <location>
        <begin position="210"/>
        <end position="213"/>
    </location>
</feature>
<feature type="region of interest" description="G5 motif" evidence="4">
    <location>
        <begin position="242"/>
        <end position="245"/>
    </location>
</feature>
<feature type="region of interest" description="Disordered" evidence="5">
    <location>
        <begin position="504"/>
        <end position="523"/>
    </location>
</feature>
<feature type="compositionally biased region" description="Basic and acidic residues" evidence="5">
    <location>
        <begin position="506"/>
        <end position="518"/>
    </location>
</feature>
<feature type="binding site" evidence="2">
    <location>
        <begin position="40"/>
        <end position="47"/>
    </location>
    <ligand>
        <name>GTP</name>
        <dbReference type="ChEBI" id="CHEBI:37565"/>
    </ligand>
</feature>
<feature type="binding site" evidence="2">
    <location>
        <begin position="141"/>
        <end position="145"/>
    </location>
    <ligand>
        <name>GTP</name>
        <dbReference type="ChEBI" id="CHEBI:37565"/>
    </ligand>
</feature>
<feature type="binding site" evidence="2">
    <location>
        <begin position="210"/>
        <end position="213"/>
    </location>
    <ligand>
        <name>GTP</name>
        <dbReference type="ChEBI" id="CHEBI:37565"/>
    </ligand>
</feature>
<proteinExistence type="evidence at transcript level"/>
<reference key="1">
    <citation type="submission" date="2006-09" db="EMBL/GenBank/DDBJ databases">
        <title>Cloning and expression analysis of Mx cDNA from large yellow croaker (Pseudosciaena crocea).</title>
        <authorList>
            <person name="Xie F."/>
            <person name="Zhang Z."/>
            <person name="Lin P."/>
            <person name="Zou Z."/>
            <person name="Jia X."/>
            <person name="Wang Y."/>
        </authorList>
    </citation>
    <scope>NUCLEOTIDE SEQUENCE [MRNA]</scope>
</reference>
<sequence>MNTLNQQYEEKVRPCIDLIDSLRSLGVEKDLALPAIAVIGDQSSGKSSVLEALSGVALPRGSGIVTRCPLELKMKRKKEGEEWYGKISYQDYEEEIEVPADVEKKIREAQDKMAGNGVEIADDLISLEIASPDVPDLTLIALPGIARVAVKKQPENIGDQIKRLIQKFIKKQETINLVVVPCNMDIATTEALKMAQEVDPDGERTLVILTKPDLVKKGTEETVIDIVHNEVIHLKKGYMIVKCRGQKEITEKVSLPEAIEREKAFFKDHAYFHTLYNDGHATVPKLAEKLTLGLVHHIERSLPRLEEQIEEKLEQTRAELERYGNGPPTDPAEKLVFLTDKVTAFTQDAIRLTTGEELKCGDGLNVFSTLRTEFMKWNAHLNHLGEIFGKRIEREVAQYEEKYRGRELPSFINYKTFEVIAKEQIKQLEELAVKRLKNIGDAVMKVFIQLAKSSFTGFPNLLEKAMTKINYIKNRNESTAESMLRTQFKMELLVYSQDRTYSSSLSDRKREEQQREVDSDQGSVISDNEERSIVYSTDNHATLQELMVHLKSYYKIASQRLADQIPMVIRYQMLQQSAIQLQREMMQVLQDKEKSEVLLKEDFDIGSKRAAFQCRLERLMKARRFLTEF</sequence>
<comment type="subcellular location">
    <subcellularLocation>
        <location evidence="1">Cytoplasm</location>
    </subcellularLocation>
</comment>
<comment type="induction">
    <text>By interferons.</text>
</comment>
<comment type="similarity">
    <text evidence="4">Belongs to the TRAFAC class dynamin-like GTPase superfamily. Dynamin/Fzo/YdjA family.</text>
</comment>
<gene>
    <name type="primary">mx</name>
</gene>
<name>MX_LARCR</name>
<accession>Q000A9</accession>
<keyword id="KW-0963">Cytoplasm</keyword>
<keyword id="KW-0342">GTP-binding</keyword>
<keyword id="KW-0547">Nucleotide-binding</keyword>
<evidence type="ECO:0000250" key="1"/>
<evidence type="ECO:0000255" key="2"/>
<evidence type="ECO:0000255" key="3">
    <source>
        <dbReference type="PROSITE-ProRule" id="PRU00720"/>
    </source>
</evidence>
<evidence type="ECO:0000255" key="4">
    <source>
        <dbReference type="PROSITE-ProRule" id="PRU01055"/>
    </source>
</evidence>
<evidence type="ECO:0000256" key="5">
    <source>
        <dbReference type="SAM" id="MobiDB-lite"/>
    </source>
</evidence>
<protein>
    <recommendedName>
        <fullName>Interferon-induced GTP-binding protein Mx</fullName>
    </recommendedName>
    <alternativeName>
        <fullName>Interferon-inducible Mx protein</fullName>
    </alternativeName>
</protein>
<organism>
    <name type="scientific">Larimichthys crocea</name>
    <name type="common">Large yellow croaker</name>
    <name type="synonym">Pseudosciaena crocea</name>
    <dbReference type="NCBI Taxonomy" id="215358"/>
    <lineage>
        <taxon>Eukaryota</taxon>
        <taxon>Metazoa</taxon>
        <taxon>Chordata</taxon>
        <taxon>Craniata</taxon>
        <taxon>Vertebrata</taxon>
        <taxon>Euteleostomi</taxon>
        <taxon>Actinopterygii</taxon>
        <taxon>Neopterygii</taxon>
        <taxon>Teleostei</taxon>
        <taxon>Neoteleostei</taxon>
        <taxon>Acanthomorphata</taxon>
        <taxon>Eupercaria</taxon>
        <taxon>Sciaenidae</taxon>
        <taxon>Larimichthys</taxon>
    </lineage>
</organism>
<dbReference type="EMBL" id="DQ988844">
    <property type="protein sequence ID" value="ABJ56003.1"/>
    <property type="molecule type" value="mRNA"/>
</dbReference>
<dbReference type="SMR" id="Q000A9"/>
<dbReference type="GO" id="GO:0005737">
    <property type="term" value="C:cytoplasm"/>
    <property type="evidence" value="ECO:0007669"/>
    <property type="project" value="UniProtKB-SubCell"/>
</dbReference>
<dbReference type="GO" id="GO:0005874">
    <property type="term" value="C:microtubule"/>
    <property type="evidence" value="ECO:0007669"/>
    <property type="project" value="TreeGrafter"/>
</dbReference>
<dbReference type="GO" id="GO:0005634">
    <property type="term" value="C:nucleus"/>
    <property type="evidence" value="ECO:0007669"/>
    <property type="project" value="TreeGrafter"/>
</dbReference>
<dbReference type="GO" id="GO:0005886">
    <property type="term" value="C:plasma membrane"/>
    <property type="evidence" value="ECO:0007669"/>
    <property type="project" value="TreeGrafter"/>
</dbReference>
<dbReference type="GO" id="GO:0098793">
    <property type="term" value="C:presynapse"/>
    <property type="evidence" value="ECO:0007669"/>
    <property type="project" value="GOC"/>
</dbReference>
<dbReference type="GO" id="GO:0005525">
    <property type="term" value="F:GTP binding"/>
    <property type="evidence" value="ECO:0007669"/>
    <property type="project" value="UniProtKB-KW"/>
</dbReference>
<dbReference type="GO" id="GO:0003924">
    <property type="term" value="F:GTPase activity"/>
    <property type="evidence" value="ECO:0007669"/>
    <property type="project" value="InterPro"/>
</dbReference>
<dbReference type="GO" id="GO:0008017">
    <property type="term" value="F:microtubule binding"/>
    <property type="evidence" value="ECO:0007669"/>
    <property type="project" value="TreeGrafter"/>
</dbReference>
<dbReference type="GO" id="GO:0051607">
    <property type="term" value="P:defense response to virus"/>
    <property type="evidence" value="ECO:0007669"/>
    <property type="project" value="TreeGrafter"/>
</dbReference>
<dbReference type="GO" id="GO:0031623">
    <property type="term" value="P:receptor internalization"/>
    <property type="evidence" value="ECO:0007669"/>
    <property type="project" value="TreeGrafter"/>
</dbReference>
<dbReference type="GO" id="GO:0016185">
    <property type="term" value="P:synaptic vesicle budding from presynaptic endocytic zone membrane"/>
    <property type="evidence" value="ECO:0007669"/>
    <property type="project" value="TreeGrafter"/>
</dbReference>
<dbReference type="CDD" id="cd08771">
    <property type="entry name" value="DLP_1"/>
    <property type="match status" value="1"/>
</dbReference>
<dbReference type="FunFam" id="1.20.120.1240:FF:000007">
    <property type="entry name" value="Interferon-induced GTP-binding protein Mx1"/>
    <property type="match status" value="1"/>
</dbReference>
<dbReference type="FunFam" id="3.40.50.300:FF:000621">
    <property type="entry name" value="Interferon-induced GTP-binding protein Mx1"/>
    <property type="match status" value="1"/>
</dbReference>
<dbReference type="Gene3D" id="1.20.120.1240">
    <property type="entry name" value="Dynamin, middle domain"/>
    <property type="match status" value="1"/>
</dbReference>
<dbReference type="Gene3D" id="3.40.50.300">
    <property type="entry name" value="P-loop containing nucleotide triphosphate hydrolases"/>
    <property type="match status" value="1"/>
</dbReference>
<dbReference type="InterPro" id="IPR022812">
    <property type="entry name" value="Dynamin"/>
</dbReference>
<dbReference type="InterPro" id="IPR001401">
    <property type="entry name" value="Dynamin_GTPase"/>
</dbReference>
<dbReference type="InterPro" id="IPR019762">
    <property type="entry name" value="Dynamin_GTPase_CS"/>
</dbReference>
<dbReference type="InterPro" id="IPR045063">
    <property type="entry name" value="Dynamin_N"/>
</dbReference>
<dbReference type="InterPro" id="IPR000375">
    <property type="entry name" value="Dynamin_stalk"/>
</dbReference>
<dbReference type="InterPro" id="IPR030381">
    <property type="entry name" value="G_DYNAMIN_dom"/>
</dbReference>
<dbReference type="InterPro" id="IPR003130">
    <property type="entry name" value="GED"/>
</dbReference>
<dbReference type="InterPro" id="IPR020850">
    <property type="entry name" value="GED_dom"/>
</dbReference>
<dbReference type="InterPro" id="IPR027417">
    <property type="entry name" value="P-loop_NTPase"/>
</dbReference>
<dbReference type="PANTHER" id="PTHR11566">
    <property type="entry name" value="DYNAMIN"/>
    <property type="match status" value="1"/>
</dbReference>
<dbReference type="PANTHER" id="PTHR11566:SF225">
    <property type="entry name" value="INTERFERON-INDUCED GTP-BINDING PROTEIN MX-RELATED"/>
    <property type="match status" value="1"/>
</dbReference>
<dbReference type="Pfam" id="PF01031">
    <property type="entry name" value="Dynamin_M"/>
    <property type="match status" value="1"/>
</dbReference>
<dbReference type="Pfam" id="PF00350">
    <property type="entry name" value="Dynamin_N"/>
    <property type="match status" value="1"/>
</dbReference>
<dbReference type="Pfam" id="PF02212">
    <property type="entry name" value="GED"/>
    <property type="match status" value="1"/>
</dbReference>
<dbReference type="PRINTS" id="PR00195">
    <property type="entry name" value="DYNAMIN"/>
</dbReference>
<dbReference type="SMART" id="SM00053">
    <property type="entry name" value="DYNc"/>
    <property type="match status" value="1"/>
</dbReference>
<dbReference type="SMART" id="SM00302">
    <property type="entry name" value="GED"/>
    <property type="match status" value="1"/>
</dbReference>
<dbReference type="SUPFAM" id="SSF52540">
    <property type="entry name" value="P-loop containing nucleoside triphosphate hydrolases"/>
    <property type="match status" value="1"/>
</dbReference>
<dbReference type="PROSITE" id="PS00410">
    <property type="entry name" value="G_DYNAMIN_1"/>
    <property type="match status" value="1"/>
</dbReference>
<dbReference type="PROSITE" id="PS51718">
    <property type="entry name" value="G_DYNAMIN_2"/>
    <property type="match status" value="1"/>
</dbReference>
<dbReference type="PROSITE" id="PS51388">
    <property type="entry name" value="GED"/>
    <property type="match status" value="1"/>
</dbReference>